<evidence type="ECO:0000255" key="1">
    <source>
        <dbReference type="HAMAP-Rule" id="MF_04079"/>
    </source>
</evidence>
<evidence type="ECO:0000256" key="2">
    <source>
        <dbReference type="SAM" id="MobiDB-lite"/>
    </source>
</evidence>
<evidence type="ECO:0000269" key="3">
    <source>
    </source>
</evidence>
<evidence type="ECO:0000269" key="4">
    <source>
    </source>
</evidence>
<evidence type="ECO:0000269" key="5">
    <source>
    </source>
</evidence>
<evidence type="ECO:0000305" key="6"/>
<organismHost>
    <name type="scientific">Homo sapiens</name>
    <name type="common">Human</name>
    <dbReference type="NCBI Taxonomy" id="9606"/>
</organismHost>
<name>TAT_HV1B1</name>
<dbReference type="EMBL" id="M15654">
    <property type="protein sequence ID" value="AAA44199.1"/>
    <property type="molecule type" value="Genomic_RNA"/>
</dbReference>
<dbReference type="EMBL" id="K02083">
    <property type="protein sequence ID" value="AAB59870.1"/>
    <property type="molecule type" value="Genomic_DNA"/>
</dbReference>
<dbReference type="EMBL" id="X01762">
    <property type="status" value="NOT_ANNOTATED_CDS"/>
    <property type="molecule type" value="Genomic_RNA"/>
</dbReference>
<dbReference type="PIR" id="S33982">
    <property type="entry name" value="S33982"/>
</dbReference>
<dbReference type="PDB" id="5L1Z">
    <property type="method" value="X-ray"/>
    <property type="resolution" value="5.90 A"/>
    <property type="chains" value="D=1-57"/>
</dbReference>
<dbReference type="PDBsum" id="5L1Z"/>
<dbReference type="SMR" id="P69697"/>
<dbReference type="iPTMnet" id="P69697"/>
<dbReference type="SwissPalm" id="P69697"/>
<dbReference type="Proteomes" id="UP000007690">
    <property type="component" value="Genome"/>
</dbReference>
<dbReference type="Proteomes" id="UP000107234">
    <property type="component" value="Genome"/>
</dbReference>
<dbReference type="Proteomes" id="UP000126245">
    <property type="component" value="Genome"/>
</dbReference>
<dbReference type="GO" id="GO:0005576">
    <property type="term" value="C:extracellular region"/>
    <property type="evidence" value="ECO:0007669"/>
    <property type="project" value="UniProtKB-SubCell"/>
</dbReference>
<dbReference type="GO" id="GO:0030430">
    <property type="term" value="C:host cell cytoplasm"/>
    <property type="evidence" value="ECO:0007669"/>
    <property type="project" value="UniProtKB-SubCell"/>
</dbReference>
<dbReference type="GO" id="GO:0044196">
    <property type="term" value="C:host cell nucleolus"/>
    <property type="evidence" value="ECO:0007669"/>
    <property type="project" value="UniProtKB-SubCell"/>
</dbReference>
<dbReference type="GO" id="GO:0042805">
    <property type="term" value="F:actinin binding"/>
    <property type="evidence" value="ECO:0007669"/>
    <property type="project" value="UniProtKB-UniRule"/>
</dbReference>
<dbReference type="GO" id="GO:0030332">
    <property type="term" value="F:cyclin binding"/>
    <property type="evidence" value="ECO:0007669"/>
    <property type="project" value="UniProtKB-UniRule"/>
</dbReference>
<dbReference type="GO" id="GO:0046872">
    <property type="term" value="F:metal ion binding"/>
    <property type="evidence" value="ECO:0000269"/>
    <property type="project" value="DisProt"/>
</dbReference>
<dbReference type="GO" id="GO:0019904">
    <property type="term" value="F:protein domain specific binding"/>
    <property type="evidence" value="ECO:0007669"/>
    <property type="project" value="UniProtKB-UniRule"/>
</dbReference>
<dbReference type="GO" id="GO:0004865">
    <property type="term" value="F:protein serine/threonine phosphatase inhibitor activity"/>
    <property type="evidence" value="ECO:0007669"/>
    <property type="project" value="UniProtKB-KW"/>
</dbReference>
<dbReference type="GO" id="GO:0001070">
    <property type="term" value="F:RNA-binding transcription regulator activity"/>
    <property type="evidence" value="ECO:0007669"/>
    <property type="project" value="UniProtKB-UniRule"/>
</dbReference>
<dbReference type="GO" id="GO:1990970">
    <property type="term" value="F:trans-activation response element binding"/>
    <property type="evidence" value="ECO:0007669"/>
    <property type="project" value="UniProtKB-UniRule"/>
</dbReference>
<dbReference type="GO" id="GO:0006351">
    <property type="term" value="P:DNA-templated transcription"/>
    <property type="evidence" value="ECO:0007669"/>
    <property type="project" value="UniProtKB-UniRule"/>
</dbReference>
<dbReference type="GO" id="GO:0032968">
    <property type="term" value="P:positive regulation of transcription elongation by RNA polymerase II"/>
    <property type="evidence" value="ECO:0007669"/>
    <property type="project" value="UniProtKB-UniRule"/>
</dbReference>
<dbReference type="GO" id="GO:0050434">
    <property type="term" value="P:positive regulation of viral transcription"/>
    <property type="evidence" value="ECO:0007669"/>
    <property type="project" value="UniProtKB-UniRule"/>
</dbReference>
<dbReference type="GO" id="GO:0039525">
    <property type="term" value="P:symbiont-mediated perturbation of host chromatin organization"/>
    <property type="evidence" value="ECO:0007669"/>
    <property type="project" value="UniProtKB-UniRule"/>
</dbReference>
<dbReference type="GO" id="GO:0052170">
    <property type="term" value="P:symbiont-mediated suppression of host innate immune response"/>
    <property type="evidence" value="ECO:0007669"/>
    <property type="project" value="UniProtKB-KW"/>
</dbReference>
<dbReference type="GO" id="GO:0039606">
    <property type="term" value="P:symbiont-mediated suppression of host translation initiation"/>
    <property type="evidence" value="ECO:0007669"/>
    <property type="project" value="UniProtKB-KW"/>
</dbReference>
<dbReference type="GO" id="GO:0039502">
    <property type="term" value="P:symbiont-mediated suppression of host type I interferon-mediated signaling pathway"/>
    <property type="evidence" value="ECO:0007669"/>
    <property type="project" value="UniProtKB-UniRule"/>
</dbReference>
<dbReference type="FunFam" id="4.10.20.10:FF:000001">
    <property type="entry name" value="Protein Tat"/>
    <property type="match status" value="1"/>
</dbReference>
<dbReference type="Gene3D" id="4.10.20.10">
    <property type="entry name" value="Tat domain"/>
    <property type="match status" value="1"/>
</dbReference>
<dbReference type="HAMAP" id="MF_04079">
    <property type="entry name" value="HIV_TAT"/>
    <property type="match status" value="1"/>
</dbReference>
<dbReference type="IDEAL" id="IID90038"/>
<dbReference type="InterPro" id="IPR001831">
    <property type="entry name" value="IV_Tat"/>
</dbReference>
<dbReference type="InterPro" id="IPR036963">
    <property type="entry name" value="Tat_dom_sf"/>
</dbReference>
<dbReference type="Pfam" id="PF00539">
    <property type="entry name" value="Tat"/>
    <property type="match status" value="1"/>
</dbReference>
<dbReference type="PRINTS" id="PR00055">
    <property type="entry name" value="HIVTATDOMAIN"/>
</dbReference>
<feature type="chain" id="PRO_0000085337" description="Protein Tat">
    <location>
        <begin position="1"/>
        <end position="86"/>
    </location>
</feature>
<feature type="region of interest" description="Transactivation" evidence="1">
    <location>
        <begin position="1"/>
        <end position="48"/>
    </location>
</feature>
<feature type="region of interest" description="Interaction with human CREBBP" evidence="1">
    <location>
        <begin position="1"/>
        <end position="24"/>
    </location>
</feature>
<feature type="region of interest" description="Cysteine-rich" evidence="1">
    <location>
        <begin position="22"/>
        <end position="37"/>
    </location>
</feature>
<feature type="region of interest" description="Core" evidence="1">
    <location>
        <begin position="38"/>
        <end position="48"/>
    </location>
</feature>
<feature type="region of interest" description="Disordered" evidence="2">
    <location>
        <begin position="48"/>
        <end position="86"/>
    </location>
</feature>
<feature type="region of interest" description="Interaction with the host capping enzyme RNGTT" evidence="1">
    <location>
        <begin position="49"/>
        <end position="86"/>
    </location>
</feature>
<feature type="short sequence motif" description="Nuclear localization signal, RNA-binding (TAR), and protein transduction" evidence="1">
    <location>
        <begin position="49"/>
        <end position="57"/>
    </location>
</feature>
<feature type="short sequence motif" description="Cell attachment site" evidence="1">
    <location>
        <begin position="78"/>
        <end position="80"/>
    </location>
</feature>
<feature type="compositionally biased region" description="Basic residues" evidence="2">
    <location>
        <begin position="48"/>
        <end position="58"/>
    </location>
</feature>
<feature type="compositionally biased region" description="Polar residues" evidence="2">
    <location>
        <begin position="62"/>
        <end position="79"/>
    </location>
</feature>
<feature type="binding site" evidence="1">
    <location>
        <position position="22"/>
    </location>
    <ligand>
        <name>Zn(2+)</name>
        <dbReference type="ChEBI" id="CHEBI:29105"/>
        <label>1</label>
    </ligand>
</feature>
<feature type="binding site" evidence="1">
    <location>
        <position position="25"/>
    </location>
    <ligand>
        <name>Zn(2+)</name>
        <dbReference type="ChEBI" id="CHEBI:29105"/>
        <label>2</label>
    </ligand>
</feature>
<feature type="binding site" evidence="1">
    <location>
        <position position="27"/>
    </location>
    <ligand>
        <name>Zn(2+)</name>
        <dbReference type="ChEBI" id="CHEBI:29105"/>
        <label>2</label>
    </ligand>
</feature>
<feature type="binding site" evidence="1">
    <location>
        <position position="30"/>
    </location>
    <ligand>
        <name>Zn(2+)</name>
        <dbReference type="ChEBI" id="CHEBI:29105"/>
        <label>2</label>
    </ligand>
</feature>
<feature type="binding site" evidence="1">
    <location>
        <position position="33"/>
    </location>
    <ligand>
        <name>Zn(2+)</name>
        <dbReference type="ChEBI" id="CHEBI:29105"/>
        <label>1</label>
    </ligand>
</feature>
<feature type="binding site" evidence="1">
    <location>
        <position position="34"/>
    </location>
    <ligand>
        <name>Zn(2+)</name>
        <dbReference type="ChEBI" id="CHEBI:29105"/>
        <label>1</label>
    </ligand>
</feature>
<feature type="binding site" evidence="1">
    <location>
        <position position="37"/>
    </location>
    <ligand>
        <name>Zn(2+)</name>
        <dbReference type="ChEBI" id="CHEBI:29105"/>
        <label>1</label>
    </ligand>
</feature>
<feature type="site" description="Essential for Tat translocation through the endosomal membrane" evidence="1">
    <location>
        <position position="11"/>
    </location>
</feature>
<feature type="modified residue" description="N6-acetyllysine; by host PCAF" evidence="1">
    <location>
        <position position="28"/>
    </location>
</feature>
<feature type="modified residue" description="N6-acetyllysine; by host EP300 and GCN5L2" evidence="1">
    <location>
        <position position="50"/>
    </location>
</feature>
<feature type="modified residue" description="N6-acetyllysine; by host EP300 and GCN5L2" evidence="1">
    <location>
        <position position="51"/>
    </location>
</feature>
<feature type="modified residue" description="Asymmetric dimethylarginine; by host PRMT6" evidence="1 4">
    <location>
        <position position="52"/>
    </location>
</feature>
<feature type="modified residue" description="Asymmetric dimethylarginine; by host PRMT6" evidence="1 3 4">
    <location>
        <position position="53"/>
    </location>
</feature>
<feature type="cross-link" description="Glycyl lysine isopeptide (Lys-Gly) (interchain with G-Cter in ubiquitin)" evidence="1">
    <location>
        <position position="71"/>
    </location>
</feature>
<feature type="splice variant" id="VSP_022298" description="In isoform Short.">
    <location>
        <begin position="73"/>
        <end position="86"/>
    </location>
</feature>
<feature type="sequence variant" description="In strain: Isolate PV22.">
    <original>S</original>
    <variation>P</variation>
    <location>
        <position position="77"/>
    </location>
</feature>
<feature type="mutagenesis site" description="Unable to insert into membranes upon acidification. 40% loss of transactivation activity." evidence="5">
    <original>W</original>
    <variation>A</variation>
    <location>
        <position position="11"/>
    </location>
</feature>
<feature type="mutagenesis site" description="85% loss of transactivation activity." evidence="5">
    <original>W</original>
    <variation>F</variation>
    <location>
        <position position="11"/>
    </location>
</feature>
<feature type="mutagenesis site" description="Unable to insert into membranes upon acidification. 95% loss of transactivation activity." evidence="5">
    <original>W</original>
    <variation>L</variation>
    <location>
        <position position="11"/>
    </location>
</feature>
<feature type="mutagenesis site" description="When added outside the cell, hardly reaches the cytosol. 60% loss of transactivation activity." evidence="5">
    <original>W</original>
    <variation>Y</variation>
    <location>
        <position position="11"/>
    </location>
</feature>
<feature type="mutagenesis site" description="Decreases methylation by host PRMT6; almost abolishes methylation by host PRMT6; when associated with K-53." evidence="4">
    <original>R</original>
    <variation>K</variation>
    <location>
        <position position="52"/>
    </location>
</feature>
<feature type="mutagenesis site" description="Decreases methylation by host PRMT6; almost abolishes methylation by host PRMT6; when associated with K-52." evidence="4">
    <original>R</original>
    <variation>K</variation>
    <location>
        <position position="53"/>
    </location>
</feature>
<gene>
    <name evidence="1" type="primary">tat</name>
</gene>
<accession>P69697</accession>
<accession>P04606</accession>
<accession>P04607</accession>
<keyword id="KW-0002">3D-structure</keyword>
<keyword id="KW-0007">Acetylation</keyword>
<keyword id="KW-0010">Activator</keyword>
<keyword id="KW-0014">AIDS</keyword>
<keyword id="KW-0025">Alternative splicing</keyword>
<keyword id="KW-0053">Apoptosis</keyword>
<keyword id="KW-1035">Host cytoplasm</keyword>
<keyword id="KW-1048">Host nucleus</keyword>
<keyword id="KW-0945">Host-virus interaction</keyword>
<keyword id="KW-1090">Inhibition of host innate immune response by virus</keyword>
<keyword id="KW-1114">Inhibition of host interferon signaling pathway by virus</keyword>
<keyword id="KW-0922">Interferon antiviral system evasion</keyword>
<keyword id="KW-1017">Isopeptide bond</keyword>
<keyword id="KW-0479">Metal-binding</keyword>
<keyword id="KW-0488">Methylation</keyword>
<keyword id="KW-1122">Modulation of host chromatin by virus</keyword>
<keyword id="KW-1126">Modulation of host PP1 activity by virus</keyword>
<keyword id="KW-0597">Phosphoprotein</keyword>
<keyword id="KW-0694">RNA-binding</keyword>
<keyword id="KW-0964">Secreted</keyword>
<keyword id="KW-0804">Transcription</keyword>
<keyword id="KW-0805">Transcription regulation</keyword>
<keyword id="KW-0832">Ubl conjugation</keyword>
<keyword id="KW-0899">Viral immunoevasion</keyword>
<keyword id="KW-0862">Zinc</keyword>
<sequence>MEPVDPRLEPWKHPGSQPKTACTNCYCKKCCFHCQVCFITKALGISYGRKKRRQRRRPPQGSQTHQVSLSKQPTSQSRGDPTGPKE</sequence>
<comment type="function">
    <text evidence="1">Transcriptional activator that increases RNA Pol II processivity, thereby increasing the level of full-length viral transcripts. Recognizes a hairpin structure at the 5'-LTR of the nascent viral mRNAs referred to as the transactivation responsive RNA element (TAR) and recruits the cyclin T1-CDK9 complex (P-TEFb complex) that will in turn hyperphosphorylate the RNA polymerase II to allow efficient elongation. The CDK9 component of P-TEFb and other Tat-activated kinases hyperphosphorylate the C-terminus of RNA Pol II that becomes stabilized and much more processive. Other factors such as HTATSF1/Tat-SF1, SUPT5H/SPT5, and HTATIP2 are also important for Tat's function. Besides its effect on RNA Pol II processivity, Tat induces chromatin remodeling of proviral genes by recruiting the histone acetyltransferases (HATs) CREBBP, EP300 and PCAF to the chromatin. This also contributes to the increase in proviral transcription rate, especially when the provirus integrates in transcriptionally silent region of the host genome. To ensure maximal activation of the LTR, Tat mediates nuclear translocation of NF-kappa-B by interacting with host RELA. Through its interaction with host TBP, Tat may also modulate transcription initiation. Tat can reactivate a latently infected cell by penetrating in it and transactivating its LTR promoter. In the cytoplasm, Tat is thought to act as a translational activator of HIV-1 mRNAs.</text>
</comment>
<comment type="function">
    <text evidence="1">Extracellular circulating Tat can be endocytosed by surrounding uninfected cells via the binding to several surface receptors such as CD26, CXCR4, heparan sulfate proteoglycans (HSPG) or LDLR. Neurons are rarely infected, but they internalize Tat via their LDLR. Through its interaction with nuclear HATs, Tat is potentially able to control the acetylation-dependent cellular gene expression. Modulates the expression of many cellular genes involved in cell survival, proliferation or in coding for cytokines or cytokine receptors. Tat plays a role in T-cell and neurons apoptosis. Tat induced neurotoxicity and apoptosis probably contribute to neuroAIDS. Circulating Tat also acts as a chemokine-like and/or growth factor-like molecule that binds to specific receptors on the surface of the cells, affecting many cellular pathways. In the vascular system, Tat binds to ITGAV/ITGB3 and ITGA5/ITGB1 integrins dimers at the surface of endothelial cells and competes with bFGF for heparin-binding sites, leading to an excess of soluble bFGF.</text>
</comment>
<comment type="subunit">
    <text evidence="1">Interacts with host CCNT1. Associates with the P-TEFb complex composed at least of Tat, P-TEFb (CDK9 and CCNT1), TAR RNA, RNA Pol II. Recruits the HATs CREBBP, TAF1/TFIID, EP300, PCAF and GCN5L2. Interacts with host KAT5/Tip60; this interaction targets the latter to degradation. Interacts with the host deacetylase SIRT1. Interacts with host capping enzyme RNGTT; this interaction stimulates RNGTT. Binds to host KDR, and to the host integrins ITGAV/ITGB3 and ITGA5/ITGB1. Interacts with host KPNB1/importin beta-1 without previous binding to KPNA1/importin alpha-1. Interacts with EIF2AK2. Interacts with host nucleosome assembly protein NAP1L1; this interaction may be required for the transport of Tat within the nucleus, since the two proteins interact at the nuclear rim. Interacts with host C1QBP/SF2P32; this interaction involves lysine-acetylated Tat. Interacts with the host chemokine receptors CCR2, CCR3 and CXCR4. Interacts with host DPP4/CD26; this interaction may trigger an anti-proliferative effect. Interacts with host LDLR. Interacts with the host extracellular matrix metalloproteinase MMP1. Interacts with host PRMT6; this interaction mediates Tat's methylation. Interacts with, and is ubiquitinated by MDM2/Hdm2. Interacts with host PSMC3 and HTATIP2. Interacts with STAB1; this interaction may overcome SATB1-mediated repression of IL2 and IL2RA (interleukin) in T cells by binding to the same domain than HDAC1. Interacts (when acetylated) with human CDK13, thereby increasing HIV-1 mRNA splicing and promoting the production of the doubly spliced HIV-1 protein Nef. Interacts with host TBP; this interaction modulates the activity of transcriptional pre-initiation complex. Interacts with host RELA. Interacts with host PLSCR1; this interaction negatively regulates Tat transactivation activity by altering its subcellular distribution.</text>
</comment>
<comment type="subcellular location">
    <subcellularLocation>
        <location evidence="1">Host nucleus</location>
        <location evidence="1">Host nucleolus</location>
    </subcellularLocation>
    <subcellularLocation>
        <location evidence="1">Host cytoplasm</location>
    </subcellularLocation>
    <subcellularLocation>
        <location evidence="1">Secreted</location>
    </subcellularLocation>
    <text evidence="1">Probably localizes to both nuclear and nucleolar compartments. Nuclear localization is mediated through the interaction of the nuclear localization signal with importin KPNB1. Secretion occurs through a Golgi-independent pathway. Tat is released from infected cells to the extracellular space where it remains associated to the cell membrane, or is secreted into the cerebrospinal fluid and sera. Extracellular Tat can be endocytosed by surrounding uninfected cells via binding to several receptors depending on the cell type.</text>
</comment>
<comment type="alternative products">
    <event type="alternative splicing"/>
    <isoform>
        <id>P69697-1</id>
        <name>Long</name>
        <sequence type="displayed"/>
    </isoform>
    <isoform>
        <id>P69697-2</id>
        <name>Short</name>
        <sequence type="described" ref="VSP_022298"/>
    </isoform>
</comment>
<comment type="domain">
    <text evidence="1">The cell attachment site mediates the interaction with ITGAV/ITGB3 and ITGA5/ITGB1 integrins, leading to vascular cell migration and invasion. This interaction also provides endothelial cells with the adhesion signal they require to grow in response to mitogens.</text>
</comment>
<comment type="domain">
    <text evidence="1">The Cys-rich region may bind 2 zinc ions. This region is involved in binding to KAT5.</text>
</comment>
<comment type="domain">
    <text evidence="1">The transactivation domain mediates the interaction with CCNT1, GCN5L2, and MDM2.</text>
</comment>
<comment type="domain">
    <text>The Arg-rich RNA-binding region binds the TAR RNA. This region also mediates the nuclear localization through direct binding to KPNB1 and is involved in Tat's transfer across cell membranes (protein transduction). The same region is required for the interaction with EP300, PCAF, EIF2AK2 and KDR.</text>
</comment>
<comment type="PTM">
    <text evidence="1">Asymmetrical arginine methylation by host PRMT6 seems to diminish the transactivation capacity of Tat and affects the interaction with host CCNT1.</text>
</comment>
<comment type="PTM">
    <text evidence="1">Acetylation by EP300, CREBBP, GCN5L2/GCN5 and PCAF regulates the transactivation activity of Tat. EP300-mediated acetylation of Lys-50 promotes dissociation of Tat from the TAR RNA through the competitive binding to PCAF's bromodomain. In addition, the non-acetylated Tat's N-terminus can also interact with PCAF. PCAF-mediated acetylation of Lys-28 enhances Tat's binding to CCNT1. Lys-50 is deacetylated by SIRT1.</text>
</comment>
<comment type="PTM">
    <text evidence="1">Polyubiquitination by host MDM2 does not target Tat to degradation, but activates its transactivation function and fosters interaction with CCNT1 and TAR RNA.</text>
</comment>
<comment type="PTM">
    <text evidence="1">Phosphorylated by EIF2AK2 on serine and threonine residues adjacent to the basic region important for TAR RNA binding and function. Phosphorylation of Tat by EIF2AK2 is dependent on the prior activation of EIF2AK2 by dsRNA.</text>
</comment>
<comment type="miscellaneous">
    <text evidence="1">This truncated variant has a premature stop codon. It may have arose as a consequence of tissue culture passaging.</text>
</comment>
<comment type="miscellaneous">
    <text evidence="1">HIV-1 lineages are divided in three main groups, M (for Major), O (for Outlier), and N (for New, or Non-M, Non-O). The vast majority of strains found worldwide belong to the group M. Group O seems to be endemic to and largely confined to Cameroon and neighboring countries in West Central Africa, where these viruses represent a small minority of HIV-1 strains. The group N is represented by a limited number of isolates from Cameroonian persons. The group M is further subdivided in 9 clades or subtypes (A to D, F to H, J and K).</text>
</comment>
<comment type="miscellaneous">
    <molecule>Isoform Short</molecule>
    <text evidence="6">Expressed in the late stage of the infection cycle, when unspliced viral RNAs are exported to the cytoplasm by the viral Rev protein.</text>
</comment>
<comment type="similarity">
    <text evidence="1">Belongs to the lentiviruses Tat family.</text>
</comment>
<proteinExistence type="evidence at protein level"/>
<reference key="1">
    <citation type="journal article" date="1985" name="Nature">
        <title>Complete nucleotide sequence of the AIDS virus, HTLV-III.</title>
        <authorList>
            <person name="Ratner L."/>
            <person name="Haseltine W.A."/>
            <person name="Patarca R."/>
            <person name="Livak K.J."/>
            <person name="Starcich B.R."/>
            <person name="Josephs S.F."/>
            <person name="Doran E.R."/>
            <person name="Rafalski J.A."/>
            <person name="Whitehorn E.A."/>
            <person name="Baumeister K."/>
            <person name="Ivanoff L."/>
            <person name="Petteway S.R. Jr."/>
            <person name="Pearson M.L."/>
            <person name="Lautenberger J.A."/>
            <person name="Papas T.S."/>
            <person name="Ghrayeb J."/>
            <person name="Chang N.T."/>
            <person name="Gallo R.C."/>
            <person name="Wong-Staal F."/>
        </authorList>
    </citation>
    <scope>NUCLEOTIDE SEQUENCE [GENOMIC RNA]</scope>
</reference>
<reference key="2">
    <citation type="journal article" date="1985" name="Nature">
        <title>Nucleic acid structure and expression of the human AIDS/lymphadenopathy retrovirus.</title>
        <authorList>
            <person name="Muesing M.A."/>
            <person name="Smith D.H."/>
            <person name="Cabradilla C.D."/>
            <person name="Benton C.V."/>
            <person name="Lasky L.A."/>
            <person name="Capon D.J."/>
        </authorList>
    </citation>
    <scope>NUCLEOTIDE SEQUENCE [GENOMIC DNA]</scope>
    <source>
        <strain>Isolate PV22</strain>
    </source>
</reference>
<reference key="3">
    <citation type="journal article" date="2005" name="J. Virol.">
        <title>Methylation of Tat by PRMT6 regulates human immunodeficiency virus type 1 gene expression.</title>
        <authorList>
            <person name="Boulanger M.C."/>
            <person name="Liang C."/>
            <person name="Russell R.S."/>
            <person name="Lin R."/>
            <person name="Bedford M.T."/>
            <person name="Wainberg M.A."/>
            <person name="Richard S."/>
        </authorList>
    </citation>
    <scope>METHYLATION AT ARG-53 BY HUMAN PRMT6</scope>
    <scope>INTERACTION WITH HUMAN PRMT6</scope>
</reference>
<reference key="4">
    <citation type="journal article" date="2005" name="Microbes Infect.">
        <title>Decoding Tat: the biology of HIV Tat posttranslational modifications.</title>
        <authorList>
            <person name="Hetzer C."/>
            <person name="Dormeyer W."/>
            <person name="Schnolzer M."/>
            <person name="Ott M."/>
        </authorList>
    </citation>
    <scope>REVIEW</scope>
    <scope>ALTERNATIVE SPLICING</scope>
</reference>
<reference key="5">
    <citation type="journal article" date="2006" name="Front. Biosci.">
        <title>The multiple functions of HIV-1 Tat: proliferation versus apoptosis.</title>
        <authorList>
            <person name="Peruzzi F."/>
        </authorList>
    </citation>
    <scope>REVIEW</scope>
</reference>
<reference key="6">
    <citation type="journal article" date="2006" name="Microbes Infect.">
        <title>HIV tat and neurotoxicity.</title>
        <authorList>
            <person name="King J.E."/>
            <person name="Eugenin E.A."/>
            <person name="Buckner C.M."/>
            <person name="Berman J.W."/>
        </authorList>
    </citation>
    <scope>REVIEW</scope>
</reference>
<reference key="7">
    <citation type="journal article" date="2009" name="J. Biol. Chem.">
        <title>Mechanism for HIV-1 Tat insertion into the endosome membrane.</title>
        <authorList>
            <person name="Yezid H."/>
            <person name="Konate K."/>
            <person name="Debaisieux S."/>
            <person name="Bonhoure A."/>
            <person name="Beaumelle B."/>
        </authorList>
    </citation>
    <scope>FUNCTION</scope>
    <scope>MUTAGENESIS OF TRP-11</scope>
</reference>
<reference key="8">
    <citation type="journal article" date="2007" name="J. Virol.">
        <title>Arginine methylation of the human immunodeficiency virus type 1 Tat protein by PRMT6 negatively affects Tat Interactions with both cyclin T1 and the Tat transactivation region.</title>
        <authorList>
            <person name="Xie B."/>
            <person name="Invernizzi C.F."/>
            <person name="Richard S."/>
            <person name="Wainberg M.A."/>
        </authorList>
    </citation>
    <scope>METHYLATION AT ARG-52 AND ARG-53 BY HUMAN PRMT6</scope>
    <scope>INTERACTION WITH HUMAN PRMT6</scope>
    <scope>MUTAGENESIS OF ARG-52 AND ARG-53</scope>
</reference>
<organism>
    <name type="scientific">Human immunodeficiency virus type 1 group M subtype B (isolate BH10)</name>
    <name type="common">HIV-1</name>
    <dbReference type="NCBI Taxonomy" id="11678"/>
    <lineage>
        <taxon>Viruses</taxon>
        <taxon>Riboviria</taxon>
        <taxon>Pararnavirae</taxon>
        <taxon>Artverviricota</taxon>
        <taxon>Revtraviricetes</taxon>
        <taxon>Ortervirales</taxon>
        <taxon>Retroviridae</taxon>
        <taxon>Orthoretrovirinae</taxon>
        <taxon>Lentivirus</taxon>
        <taxon>Human immunodeficiency virus type 1</taxon>
    </lineage>
</organism>
<protein>
    <recommendedName>
        <fullName evidence="1">Protein Tat</fullName>
    </recommendedName>
    <alternativeName>
        <fullName evidence="1">Transactivating regulatory protein</fullName>
    </alternativeName>
</protein>